<proteinExistence type="evidence at protein level"/>
<protein>
    <recommendedName>
        <fullName evidence="2">Type II methyltransferase M.MgeORF184P</fullName>
        <shortName evidence="2">M.MgeORF184P</shortName>
        <ecNumber evidence="5">2.1.1.72</ecNumber>
    </recommendedName>
    <alternativeName>
        <fullName evidence="3">Type II methyltransferase M.MgeI</fullName>
        <shortName evidence="3">M.MgeI</shortName>
    </alternativeName>
</protein>
<dbReference type="EC" id="2.1.1.72" evidence="5"/>
<dbReference type="EMBL" id="L43967">
    <property type="protein sequence ID" value="AAC71403.1"/>
    <property type="molecule type" value="Genomic_DNA"/>
</dbReference>
<dbReference type="EMBL" id="U02115">
    <property type="protein sequence ID" value="AAD12389.1"/>
    <property type="molecule type" value="Genomic_DNA"/>
</dbReference>
<dbReference type="PIR" id="D64220">
    <property type="entry name" value="D64220"/>
</dbReference>
<dbReference type="RefSeq" id="WP_010869363.1">
    <property type="nucleotide sequence ID" value="NC_000908.2"/>
</dbReference>
<dbReference type="STRING" id="243273.MG_184"/>
<dbReference type="REBASE" id="257161">
    <property type="entry name" value="M.Ssp9304ORF3208P"/>
</dbReference>
<dbReference type="REBASE" id="78740">
    <property type="entry name" value="M.MgeORF184P"/>
</dbReference>
<dbReference type="GeneID" id="88282316"/>
<dbReference type="KEGG" id="mge:MG_184"/>
<dbReference type="eggNOG" id="ENOG502Z7VI">
    <property type="taxonomic scope" value="Bacteria"/>
</dbReference>
<dbReference type="HOGENOM" id="CLU_057063_0_0_14"/>
<dbReference type="InParanoid" id="Q49400"/>
<dbReference type="OrthoDB" id="9774673at2"/>
<dbReference type="BioCyc" id="MGEN243273:G1GJ2-208-MONOMER"/>
<dbReference type="Proteomes" id="UP000000807">
    <property type="component" value="Chromosome"/>
</dbReference>
<dbReference type="GO" id="GO:0003677">
    <property type="term" value="F:DNA binding"/>
    <property type="evidence" value="ECO:0007669"/>
    <property type="project" value="UniProtKB-KW"/>
</dbReference>
<dbReference type="GO" id="GO:0009007">
    <property type="term" value="F:site-specific DNA-methyltransferase (adenine-specific) activity"/>
    <property type="evidence" value="ECO:0007669"/>
    <property type="project" value="UniProtKB-EC"/>
</dbReference>
<dbReference type="GO" id="GO:0032259">
    <property type="term" value="P:methylation"/>
    <property type="evidence" value="ECO:0007669"/>
    <property type="project" value="UniProtKB-KW"/>
</dbReference>
<dbReference type="InterPro" id="IPR002052">
    <property type="entry name" value="DNA_methylase_N6_adenine_CS"/>
</dbReference>
<dbReference type="InterPro" id="IPR025247">
    <property type="entry name" value="EcoRI-like_methylase"/>
</dbReference>
<dbReference type="Pfam" id="PF13651">
    <property type="entry name" value="EcoRI_methylase"/>
    <property type="match status" value="2"/>
</dbReference>
<dbReference type="PROSITE" id="PS00092">
    <property type="entry name" value="N6_MTASE"/>
    <property type="match status" value="1"/>
</dbReference>
<name>MTM1_MYCGE</name>
<gene>
    <name type="ordered locus">MG184</name>
</gene>
<comment type="function">
    <text evidence="1 5">Probably recognizes the double-stranded sequence 5'-CTAT-3' and methylates A-3 on only one strand; as the bacterial DNA is methylated on this sequence and this is the only type II methylase in the genome, it is probably responsible for all of the methylation on this site in the genome.</text>
</comment>
<comment type="catalytic activity">
    <reaction evidence="1 5">
        <text>a 2'-deoxyadenosine in DNA + S-adenosyl-L-methionine = an N(6)-methyl-2'-deoxyadenosine in DNA + S-adenosyl-L-homocysteine + H(+)</text>
        <dbReference type="Rhea" id="RHEA:15197"/>
        <dbReference type="Rhea" id="RHEA-COMP:12418"/>
        <dbReference type="Rhea" id="RHEA-COMP:12419"/>
        <dbReference type="ChEBI" id="CHEBI:15378"/>
        <dbReference type="ChEBI" id="CHEBI:57856"/>
        <dbReference type="ChEBI" id="CHEBI:59789"/>
        <dbReference type="ChEBI" id="CHEBI:90615"/>
        <dbReference type="ChEBI" id="CHEBI:90616"/>
        <dbReference type="EC" id="2.1.1.72"/>
    </reaction>
</comment>
<comment type="similarity">
    <text evidence="4">Belongs to the N(4)/N(6)-methyltransferase family.</text>
</comment>
<reference key="1">
    <citation type="journal article" date="1995" name="Science">
        <title>The minimal gene complement of Mycoplasma genitalium.</title>
        <authorList>
            <person name="Fraser C.M."/>
            <person name="Gocayne J.D."/>
            <person name="White O."/>
            <person name="Adams M.D."/>
            <person name="Clayton R.A."/>
            <person name="Fleischmann R.D."/>
            <person name="Bult C.J."/>
            <person name="Kerlavage A.R."/>
            <person name="Sutton G.G."/>
            <person name="Kelley J.M."/>
            <person name="Fritchman J.L."/>
            <person name="Weidman J.F."/>
            <person name="Small K.V."/>
            <person name="Sandusky M."/>
            <person name="Fuhrmann J.L."/>
            <person name="Nguyen D.T."/>
            <person name="Utterback T.R."/>
            <person name="Saudek D.M."/>
            <person name="Phillips C.A."/>
            <person name="Merrick J.M."/>
            <person name="Tomb J.-F."/>
            <person name="Dougherty B.A."/>
            <person name="Bott K.F."/>
            <person name="Hu P.-C."/>
            <person name="Lucier T.S."/>
            <person name="Peterson S.N."/>
            <person name="Smith H.O."/>
            <person name="Hutchison C.A. III"/>
            <person name="Venter J.C."/>
        </authorList>
    </citation>
    <scope>NUCLEOTIDE SEQUENCE [LARGE SCALE GENOMIC DNA]</scope>
    <source>
        <strain>ATCC 33530 / DSM 19775 / NCTC 10195 / G37</strain>
    </source>
</reference>
<reference key="2">
    <citation type="journal article" date="1993" name="J. Bacteriol.">
        <title>A survey of the Mycoplasma genitalium genome by using random sequencing.</title>
        <authorList>
            <person name="Peterson S.N."/>
            <person name="Hu P.-C."/>
            <person name="Bott K.F."/>
            <person name="Hutchison C.A. III"/>
        </authorList>
    </citation>
    <scope>NUCLEOTIDE SEQUENCE [GENOMIC DNA] OF 174-240</scope>
    <source>
        <strain>ATCC 33530 / DSM 19775 / NCTC 10195 / G37</strain>
    </source>
</reference>
<reference key="3">
    <citation type="journal article" date="2003" name="Nucleic Acids Res.">
        <title>A nomenclature for restriction enzymes, DNA methyltransferases, homing endonucleases and their genes.</title>
        <authorList>
            <person name="Roberts R.J."/>
            <person name="Belfort M."/>
            <person name="Bestor T."/>
            <person name="Bhagwat A.S."/>
            <person name="Bickle T.A."/>
            <person name="Bitinaite J."/>
            <person name="Blumenthal R.M."/>
            <person name="Degtyarev S.K."/>
            <person name="Dryden D.T."/>
            <person name="Dybvig K."/>
            <person name="Firman K."/>
            <person name="Gromova E.S."/>
            <person name="Gumport R.I."/>
            <person name="Halford S.E."/>
            <person name="Hattman S."/>
            <person name="Heitman J."/>
            <person name="Hornby D.P."/>
            <person name="Janulaitis A."/>
            <person name="Jeltsch A."/>
            <person name="Josephsen J."/>
            <person name="Kiss A."/>
            <person name="Klaenhammer T.R."/>
            <person name="Kobayashi I."/>
            <person name="Kong H."/>
            <person name="Krueger D.H."/>
            <person name="Lacks S."/>
            <person name="Marinus M.G."/>
            <person name="Miyahara M."/>
            <person name="Morgan R.D."/>
            <person name="Murray N.E."/>
            <person name="Nagaraja V."/>
            <person name="Piekarowicz A."/>
            <person name="Pingoud A."/>
            <person name="Raleigh E."/>
            <person name="Rao D.N."/>
            <person name="Reich N."/>
            <person name="Repin V.E."/>
            <person name="Selker E.U."/>
            <person name="Shaw P.C."/>
            <person name="Stein D.C."/>
            <person name="Stoddard B.L."/>
            <person name="Szybalski W."/>
            <person name="Trautner T.A."/>
            <person name="Van Etten J.L."/>
            <person name="Vitor J.M."/>
            <person name="Wilson G.G."/>
            <person name="Xu S.Y."/>
        </authorList>
    </citation>
    <scope>NOMENCLATURE</scope>
</reference>
<reference key="4">
    <citation type="journal article" date="2013" name="PLoS Genet.">
        <title>Comprehensive methylome characterization of Mycoplasma genitalium and Mycoplasma pneumoniae at single-base resolution.</title>
        <authorList>
            <person name="Lluch-Senar M."/>
            <person name="Luong K."/>
            <person name="Llorens-Rico V."/>
            <person name="Delgado J."/>
            <person name="Fang G."/>
            <person name="Spittle K."/>
            <person name="Clark T.A."/>
            <person name="Schadt E."/>
            <person name="Turner S.W."/>
            <person name="Korlach J."/>
            <person name="Serrano L."/>
        </authorList>
    </citation>
    <scope>PROBABLE FUNCTION</scope>
    <scope>GENOME METHYLATION</scope>
    <scope>DISCUSSION OF SEQUENCE</scope>
    <source>
        <strain>ATCC 33530 / DSM 19775 / NCTC 10195 / G37</strain>
    </source>
</reference>
<evidence type="ECO:0000250" key="1">
    <source>
        <dbReference type="UniProtKB" id="Q50290"/>
    </source>
</evidence>
<evidence type="ECO:0000303" key="2">
    <source>
    </source>
</evidence>
<evidence type="ECO:0000303" key="3">
    <source>
    </source>
</evidence>
<evidence type="ECO:0000305" key="4"/>
<evidence type="ECO:0000305" key="5">
    <source>
    </source>
</evidence>
<feature type="chain" id="PRO_0000088015" description="Type II methyltransferase M.MgeORF184P">
    <location>
        <begin position="1"/>
        <end position="317"/>
    </location>
</feature>
<keyword id="KW-0238">DNA-binding</keyword>
<keyword id="KW-0489">Methyltransferase</keyword>
<keyword id="KW-1185">Reference proteome</keyword>
<keyword id="KW-0949">S-adenosyl-L-methionine</keyword>
<keyword id="KW-0808">Transferase</keyword>
<organism>
    <name type="scientific">Mycoplasma genitalium (strain ATCC 33530 / DSM 19775 / NCTC 10195 / G37)</name>
    <name type="common">Mycoplasmoides genitalium</name>
    <dbReference type="NCBI Taxonomy" id="243273"/>
    <lineage>
        <taxon>Bacteria</taxon>
        <taxon>Bacillati</taxon>
        <taxon>Mycoplasmatota</taxon>
        <taxon>Mycoplasmoidales</taxon>
        <taxon>Mycoplasmoidaceae</taxon>
        <taxon>Mycoplasmoides</taxon>
    </lineage>
</organism>
<sequence>MHHFNRAKKAKNNEFFTLIDEIENEVINYQKQFANKTIFCNCNDGKNSHFFQFFQTNFNQLQLKKLIGFSFNNLSQADKFTFDGNKVTKTKLKGNGDFSSDESIEVLKQADIVVTNPPFSLFQSFIDLLIQHNKQFLVLGLNAAVSYNHIFTYFKTNKLWFGYTVNKTMSFSVNSDYQLYNPKTSNFFTKNGKCFQKIAGISWFTNLGKPHYNPFLNTNCFYKNNEKNYPKFDWYDAIYVNKIKNIPMDWNGLMGVPLTFLNCYNPKQFELVDCLANPYATLDTLKTNAFVKLNQGDVRNVNGKRRYVRVIIKKQQI</sequence>
<accession>Q49400</accession>
<accession>Q49252</accession>